<feature type="chain" id="PRO_0000430337" description="UDP-glucose:protein N-beta-glucosyltransferase">
    <location>
        <begin position="1"/>
        <end position="620"/>
    </location>
</feature>
<gene>
    <name type="ordered locus">APP7_1697</name>
</gene>
<evidence type="ECO:0000269" key="1">
    <source>
    </source>
</evidence>
<evidence type="ECO:0000305" key="2"/>
<evidence type="ECO:0000305" key="3">
    <source>
    </source>
</evidence>
<proteinExistence type="evidence at protein level"/>
<organism>
    <name type="scientific">Actinobacillus pleuropneumoniae serotype 7 (strain AP76)</name>
    <dbReference type="NCBI Taxonomy" id="537457"/>
    <lineage>
        <taxon>Bacteria</taxon>
        <taxon>Pseudomonadati</taxon>
        <taxon>Pseudomonadota</taxon>
        <taxon>Gammaproteobacteria</taxon>
        <taxon>Pasteurellales</taxon>
        <taxon>Pasteurellaceae</taxon>
        <taxon>Actinobacillus</taxon>
    </lineage>
</organism>
<dbReference type="EC" id="2.4.1.-"/>
<dbReference type="EMBL" id="CP001091">
    <property type="protein sequence ID" value="ACE62349.1"/>
    <property type="molecule type" value="Genomic_DNA"/>
</dbReference>
<dbReference type="RefSeq" id="WP_012478567.1">
    <property type="nucleotide sequence ID" value="NC_010939.1"/>
</dbReference>
<dbReference type="SMR" id="B3H2N2"/>
<dbReference type="CAZy" id="GT41">
    <property type="family name" value="Glycosyltransferase Family 41"/>
</dbReference>
<dbReference type="KEGG" id="apa:APP7_1697"/>
<dbReference type="HOGENOM" id="CLU_441347_0_0_6"/>
<dbReference type="UniPathway" id="UPA00378"/>
<dbReference type="PHI-base" id="PHI:6867"/>
<dbReference type="Proteomes" id="UP000001226">
    <property type="component" value="Chromosome"/>
</dbReference>
<dbReference type="GO" id="GO:0005737">
    <property type="term" value="C:cytoplasm"/>
    <property type="evidence" value="ECO:0007669"/>
    <property type="project" value="UniProtKB-SubCell"/>
</dbReference>
<dbReference type="GO" id="GO:0035251">
    <property type="term" value="F:UDP-glucosyltransferase activity"/>
    <property type="evidence" value="ECO:0000314"/>
    <property type="project" value="UniProtKB"/>
</dbReference>
<dbReference type="GO" id="GO:0018279">
    <property type="term" value="P:protein N-linked glycosylation via asparagine"/>
    <property type="evidence" value="ECO:0000314"/>
    <property type="project" value="UniProtKB"/>
</dbReference>
<dbReference type="FunFam" id="3.40.50.2000:FF:000272">
    <property type="entry name" value="Adhesin"/>
    <property type="match status" value="1"/>
</dbReference>
<dbReference type="Gene3D" id="3.40.50.11380">
    <property type="match status" value="1"/>
</dbReference>
<dbReference type="Gene3D" id="3.40.50.2000">
    <property type="entry name" value="Glycogen Phosphorylase B"/>
    <property type="match status" value="1"/>
</dbReference>
<dbReference type="InterPro" id="IPR051939">
    <property type="entry name" value="Glycosyltr_41/O-GlcNAc_trsf"/>
</dbReference>
<dbReference type="InterPro" id="IPR040542">
    <property type="entry name" value="HMW1_D2"/>
</dbReference>
<dbReference type="InterPro" id="IPR041109">
    <property type="entry name" value="HMW1C_N"/>
</dbReference>
<dbReference type="PANTHER" id="PTHR44835:SF1">
    <property type="entry name" value="PROTEIN O-GLCNAC TRANSFERASE"/>
    <property type="match status" value="1"/>
</dbReference>
<dbReference type="PANTHER" id="PTHR44835">
    <property type="entry name" value="UDP-N-ACETYLGLUCOSAMINE--PEPTIDE N-ACETYLGLUCOSAMINYLTRANSFERASE SPINDLY-RELATED"/>
    <property type="match status" value="1"/>
</dbReference>
<dbReference type="Pfam" id="PF18254">
    <property type="entry name" value="HMw1_D2"/>
    <property type="match status" value="1"/>
</dbReference>
<dbReference type="Pfam" id="PF18071">
    <property type="entry name" value="HMW1C_N"/>
    <property type="match status" value="1"/>
</dbReference>
<sequence>MENENKPNVANFEAAVAVKDYEKACSELLLILSQLDSNFGGIQEIEFEYPVQLQDLEQEKIVYFCTRMATAITTLFSDPVLEISDLGVQRFLVYQRWLALIFASSPFVNADHILQTYNREPNRKNSLEIHLDSSKSSLIKFCILYLPESNVNLNLDVMWNISPELCASLCFALQSPRFIGTSTAFNKRATILQWFPRHLDQLKNLNNIPSAISHDVYMHCSYDTSVNKHDVKRALNHVIRRHIESEYGWKDRYVAHIGYRNNKPVMVVLLEHFHSAHSIYRTHSTSMIAAREHFYLIGLGSPSVDQAGQEVFDEFHLVAGDNMKQKLEFIRSVCESNGAAIFYMPSIGMDMTTIFASNTRLAPIQAIALGHPATTHSDFIEYVIVEDDYVGSEACFSETLLRLPKDALPYVPSALAPEKVDYLLRENPEVVNIGIASTTMKLNPYFLEALKAIRDRAKVKVHFHFALGQSNGITHPYVERFIKSYLGDSATAHPHSPYHQYLRILHNCDMMVNPFPFGNTNGIIDMVTLGLVGVCKTGAEVHEHIDEGLFKRLGLPEWLIANTVDEYVERAVRLAENHQERLELRRYIIENNGLNTLFTGDPRPMGQVFLEKLNAFLKEN</sequence>
<name>NGT_ACTP7</name>
<reference key="1">
    <citation type="submission" date="2008-06" db="EMBL/GenBank/DDBJ databases">
        <title>Genome and proteome analysis of A. pleuropneumoniae serotype 7.</title>
        <authorList>
            <person name="Linke B."/>
            <person name="Buettner F."/>
            <person name="Martinez-Arias R."/>
            <person name="Goesmann A."/>
            <person name="Baltes N."/>
            <person name="Tegetmeyer H."/>
            <person name="Singh M."/>
            <person name="Gerlach G.F."/>
        </authorList>
    </citation>
    <scope>NUCLEOTIDE SEQUENCE [LARGE SCALE GENOMIC DNA]</scope>
    <source>
        <strain>AP76</strain>
    </source>
</reference>
<reference key="2">
    <citation type="journal article" date="2011" name="J. Biol. Chem.">
        <title>Cytoplasmic N-glycosyltransferase of Actinobacillus pleuropneumoniae is an inverting enzyme and recognizes the NX(S/T) consensus sequence.</title>
        <authorList>
            <person name="Schwarz F."/>
            <person name="Fan Y.Y."/>
            <person name="Schubert M."/>
            <person name="Aebi M."/>
        </authorList>
    </citation>
    <scope>FUNCTION</scope>
    <scope>CATALYTIC ACTIVITY</scope>
    <scope>SUBSTRATE SPECIFICITY</scope>
    <scope>PATHWAY</scope>
    <scope>COFACTOR</scope>
    <scope>SUBCELLULAR LOCATION</scope>
    <source>
        <strain>AP76</strain>
    </source>
</reference>
<protein>
    <recommendedName>
        <fullName>UDP-glucose:protein N-beta-glucosyltransferase</fullName>
        <shortName>UDP-Glc:protein N-glucosyltransferase</shortName>
        <ecNumber>2.4.1.-</ecNumber>
    </recommendedName>
    <alternativeName>
        <fullName>HMW1C-like protein</fullName>
    </alternativeName>
    <alternativeName>
        <fullName>N-glycosyltransferase</fullName>
        <shortName>NGT</shortName>
    </alternativeName>
</protein>
<accession>B3H2N2</accession>
<comment type="function">
    <text evidence="1">Inverting glycosyltransferase that catalyzes the transfer of one glucose moiety from UDP-glucose to an asparagine residue in peptides and proteins containing the NX(S/T) motif, resulting in their modification with a beta-linked 1,N-glucose. Likely acts as a key component of a general protein glycosylation system. Also accepts UDP-galactose as a substrate donor, albeit with low efficiency. Cannot use UDP-GlcNAc or UDP-GalNAc as substrate donor.</text>
</comment>
<comment type="catalytic activity">
    <reaction evidence="1">
        <text>L-asparaginyl-[protein] + UDP-alpha-D-glucose = N(4)-(beta-D-glucosyl)-L-asparaginyl-[protein] + UDP + H(+)</text>
        <dbReference type="Rhea" id="RHEA:45952"/>
        <dbReference type="Rhea" id="RHEA-COMP:11400"/>
        <dbReference type="Rhea" id="RHEA-COMP:12804"/>
        <dbReference type="ChEBI" id="CHEBI:15378"/>
        <dbReference type="ChEBI" id="CHEBI:50347"/>
        <dbReference type="ChEBI" id="CHEBI:58223"/>
        <dbReference type="ChEBI" id="CHEBI:58885"/>
        <dbReference type="ChEBI" id="CHEBI:85501"/>
    </reaction>
</comment>
<comment type="cofactor">
    <text evidence="1">Does not require a metal cofactor.</text>
</comment>
<comment type="pathway">
    <text evidence="1">Protein modification; protein glycosylation.</text>
</comment>
<comment type="subcellular location">
    <subcellularLocation>
        <location evidence="3">Cytoplasm</location>
    </subcellularLocation>
</comment>
<comment type="similarity">
    <text evidence="2">Belongs to the glycosyltransferase 41 family.</text>
</comment>
<keyword id="KW-0963">Cytoplasm</keyword>
<keyword id="KW-0328">Glycosyltransferase</keyword>
<keyword id="KW-0808">Transferase</keyword>